<keyword id="KW-0687">Ribonucleoprotein</keyword>
<keyword id="KW-0689">Ribosomal protein</keyword>
<keyword id="KW-0694">RNA-binding</keyword>
<keyword id="KW-0699">rRNA-binding</keyword>
<accession>B0BUQ5</accession>
<organism>
    <name type="scientific">Rickettsia rickettsii (strain Iowa)</name>
    <dbReference type="NCBI Taxonomy" id="452659"/>
    <lineage>
        <taxon>Bacteria</taxon>
        <taxon>Pseudomonadati</taxon>
        <taxon>Pseudomonadota</taxon>
        <taxon>Alphaproteobacteria</taxon>
        <taxon>Rickettsiales</taxon>
        <taxon>Rickettsiaceae</taxon>
        <taxon>Rickettsieae</taxon>
        <taxon>Rickettsia</taxon>
        <taxon>spotted fever group</taxon>
    </lineage>
</organism>
<gene>
    <name evidence="1" type="primary">rplV</name>
    <name type="ordered locus">RrIowa_1192</name>
</gene>
<protein>
    <recommendedName>
        <fullName evidence="1">Large ribosomal subunit protein uL22</fullName>
    </recommendedName>
    <alternativeName>
        <fullName evidence="2">50S ribosomal protein L22</fullName>
    </alternativeName>
</protein>
<evidence type="ECO:0000255" key="1">
    <source>
        <dbReference type="HAMAP-Rule" id="MF_01331"/>
    </source>
</evidence>
<evidence type="ECO:0000305" key="2"/>
<name>RL22_RICRO</name>
<feature type="chain" id="PRO_1000086565" description="Large ribosomal subunit protein uL22">
    <location>
        <begin position="1"/>
        <end position="119"/>
    </location>
</feature>
<proteinExistence type="inferred from homology"/>
<comment type="function">
    <text evidence="1">This protein binds specifically to 23S rRNA; its binding is stimulated by other ribosomal proteins, e.g. L4, L17, and L20. It is important during the early stages of 50S assembly. It makes multiple contacts with different domains of the 23S rRNA in the assembled 50S subunit and ribosome (By similarity).</text>
</comment>
<comment type="function">
    <text evidence="1">The globular domain of the protein is located near the polypeptide exit tunnel on the outside of the subunit, while an extended beta-hairpin is found that lines the wall of the exit tunnel in the center of the 70S ribosome.</text>
</comment>
<comment type="subunit">
    <text evidence="1">Part of the 50S ribosomal subunit.</text>
</comment>
<comment type="similarity">
    <text evidence="1">Belongs to the universal ribosomal protein uL22 family.</text>
</comment>
<dbReference type="EMBL" id="CP000766">
    <property type="protein sequence ID" value="ABY72965.1"/>
    <property type="molecule type" value="Genomic_DNA"/>
</dbReference>
<dbReference type="RefSeq" id="WP_004997796.1">
    <property type="nucleotide sequence ID" value="NC_010263.3"/>
</dbReference>
<dbReference type="SMR" id="B0BUQ5"/>
<dbReference type="GeneID" id="95361481"/>
<dbReference type="KEGG" id="rrj:RrIowa_1192"/>
<dbReference type="eggNOG" id="COG0091">
    <property type="taxonomic scope" value="Bacteria"/>
</dbReference>
<dbReference type="HOGENOM" id="CLU_083987_3_0_5"/>
<dbReference type="Proteomes" id="UP000000796">
    <property type="component" value="Chromosome"/>
</dbReference>
<dbReference type="GO" id="GO:0022625">
    <property type="term" value="C:cytosolic large ribosomal subunit"/>
    <property type="evidence" value="ECO:0007669"/>
    <property type="project" value="TreeGrafter"/>
</dbReference>
<dbReference type="GO" id="GO:0019843">
    <property type="term" value="F:rRNA binding"/>
    <property type="evidence" value="ECO:0007669"/>
    <property type="project" value="UniProtKB-UniRule"/>
</dbReference>
<dbReference type="GO" id="GO:0003735">
    <property type="term" value="F:structural constituent of ribosome"/>
    <property type="evidence" value="ECO:0007669"/>
    <property type="project" value="InterPro"/>
</dbReference>
<dbReference type="GO" id="GO:0006412">
    <property type="term" value="P:translation"/>
    <property type="evidence" value="ECO:0007669"/>
    <property type="project" value="UniProtKB-UniRule"/>
</dbReference>
<dbReference type="CDD" id="cd00336">
    <property type="entry name" value="Ribosomal_L22"/>
    <property type="match status" value="1"/>
</dbReference>
<dbReference type="Gene3D" id="3.90.470.10">
    <property type="entry name" value="Ribosomal protein L22/L17"/>
    <property type="match status" value="1"/>
</dbReference>
<dbReference type="HAMAP" id="MF_01331_B">
    <property type="entry name" value="Ribosomal_uL22_B"/>
    <property type="match status" value="1"/>
</dbReference>
<dbReference type="InterPro" id="IPR001063">
    <property type="entry name" value="Ribosomal_uL22"/>
</dbReference>
<dbReference type="InterPro" id="IPR005727">
    <property type="entry name" value="Ribosomal_uL22_bac/chlpt-type"/>
</dbReference>
<dbReference type="InterPro" id="IPR047867">
    <property type="entry name" value="Ribosomal_uL22_bac/org-type"/>
</dbReference>
<dbReference type="InterPro" id="IPR018260">
    <property type="entry name" value="Ribosomal_uL22_CS"/>
</dbReference>
<dbReference type="InterPro" id="IPR036394">
    <property type="entry name" value="Ribosomal_uL22_sf"/>
</dbReference>
<dbReference type="NCBIfam" id="TIGR01044">
    <property type="entry name" value="rplV_bact"/>
    <property type="match status" value="1"/>
</dbReference>
<dbReference type="PANTHER" id="PTHR13501">
    <property type="entry name" value="CHLOROPLAST 50S RIBOSOMAL PROTEIN L22-RELATED"/>
    <property type="match status" value="1"/>
</dbReference>
<dbReference type="PANTHER" id="PTHR13501:SF8">
    <property type="entry name" value="LARGE RIBOSOMAL SUBUNIT PROTEIN UL22M"/>
    <property type="match status" value="1"/>
</dbReference>
<dbReference type="Pfam" id="PF00237">
    <property type="entry name" value="Ribosomal_L22"/>
    <property type="match status" value="1"/>
</dbReference>
<dbReference type="SUPFAM" id="SSF54843">
    <property type="entry name" value="Ribosomal protein L22"/>
    <property type="match status" value="1"/>
</dbReference>
<dbReference type="PROSITE" id="PS00464">
    <property type="entry name" value="RIBOSOMAL_L22"/>
    <property type="match status" value="1"/>
</dbReference>
<sequence length="119" mass="13267">MVQENKNFATAQAKSIRVSSRKLNLVAAFIRNMKVSEALVQLTFSPKRIAKVVKDCLQSAVANAENNLGLDIDRLVITKATVGKALVMKRVMPRAKGRATRINKFFSNLYITVTEKEDN</sequence>
<reference key="1">
    <citation type="journal article" date="2008" name="Infect. Immun.">
        <title>Genomic comparison of virulent Rickettsia rickettsii Sheila Smith and avirulent Rickettsia rickettsii Iowa.</title>
        <authorList>
            <person name="Ellison D.W."/>
            <person name="Clark T.R."/>
            <person name="Sturdevant D.E."/>
            <person name="Virtaneva K."/>
            <person name="Porcella S.F."/>
            <person name="Hackstadt T."/>
        </authorList>
    </citation>
    <scope>NUCLEOTIDE SEQUENCE [LARGE SCALE GENOMIC DNA]</scope>
    <source>
        <strain>Iowa</strain>
    </source>
</reference>